<gene>
    <name evidence="1" type="primary">lexA</name>
    <name type="ordered locus">CD630_19310</name>
</gene>
<dbReference type="EC" id="3.4.21.88" evidence="1"/>
<dbReference type="EMBL" id="AM180355">
    <property type="protein sequence ID" value="CAJ68806.2"/>
    <property type="molecule type" value="Genomic_DNA"/>
</dbReference>
<dbReference type="RefSeq" id="WP_009897067.1">
    <property type="nucleotide sequence ID" value="NZ_JAUPES010000023.1"/>
</dbReference>
<dbReference type="RefSeq" id="YP_001088437.2">
    <property type="nucleotide sequence ID" value="NC_009089.1"/>
</dbReference>
<dbReference type="SMR" id="Q187P1"/>
<dbReference type="STRING" id="272563.CD630_19310"/>
<dbReference type="MEROPS" id="S24.001"/>
<dbReference type="EnsemblBacteria" id="CAJ68806">
    <property type="protein sequence ID" value="CAJ68806"/>
    <property type="gene ID" value="CD630_19310"/>
</dbReference>
<dbReference type="GeneID" id="66354316"/>
<dbReference type="KEGG" id="cdf:CD630_19310"/>
<dbReference type="KEGG" id="pdc:CDIF630_02135"/>
<dbReference type="PATRIC" id="fig|272563.120.peg.2027"/>
<dbReference type="eggNOG" id="COG1974">
    <property type="taxonomic scope" value="Bacteria"/>
</dbReference>
<dbReference type="OrthoDB" id="9802364at2"/>
<dbReference type="PhylomeDB" id="Q187P1"/>
<dbReference type="BioCyc" id="PDIF272563:G12WB-2073-MONOMER"/>
<dbReference type="Proteomes" id="UP000001978">
    <property type="component" value="Chromosome"/>
</dbReference>
<dbReference type="GO" id="GO:0003677">
    <property type="term" value="F:DNA binding"/>
    <property type="evidence" value="ECO:0007669"/>
    <property type="project" value="UniProtKB-UniRule"/>
</dbReference>
<dbReference type="GO" id="GO:0004252">
    <property type="term" value="F:serine-type endopeptidase activity"/>
    <property type="evidence" value="ECO:0007669"/>
    <property type="project" value="UniProtKB-UniRule"/>
</dbReference>
<dbReference type="GO" id="GO:0006281">
    <property type="term" value="P:DNA repair"/>
    <property type="evidence" value="ECO:0007669"/>
    <property type="project" value="UniProtKB-UniRule"/>
</dbReference>
<dbReference type="GO" id="GO:0006260">
    <property type="term" value="P:DNA replication"/>
    <property type="evidence" value="ECO:0007669"/>
    <property type="project" value="UniProtKB-UniRule"/>
</dbReference>
<dbReference type="GO" id="GO:0045892">
    <property type="term" value="P:negative regulation of DNA-templated transcription"/>
    <property type="evidence" value="ECO:0007669"/>
    <property type="project" value="UniProtKB-UniRule"/>
</dbReference>
<dbReference type="GO" id="GO:0006508">
    <property type="term" value="P:proteolysis"/>
    <property type="evidence" value="ECO:0007669"/>
    <property type="project" value="InterPro"/>
</dbReference>
<dbReference type="GO" id="GO:0009432">
    <property type="term" value="P:SOS response"/>
    <property type="evidence" value="ECO:0007669"/>
    <property type="project" value="UniProtKB-UniRule"/>
</dbReference>
<dbReference type="CDD" id="cd00090">
    <property type="entry name" value="HTH_ARSR"/>
    <property type="match status" value="1"/>
</dbReference>
<dbReference type="CDD" id="cd06529">
    <property type="entry name" value="S24_LexA-like"/>
    <property type="match status" value="1"/>
</dbReference>
<dbReference type="FunFam" id="1.10.10.10:FF:000009">
    <property type="entry name" value="LexA repressor"/>
    <property type="match status" value="1"/>
</dbReference>
<dbReference type="FunFam" id="2.10.109.10:FF:000001">
    <property type="entry name" value="LexA repressor"/>
    <property type="match status" value="1"/>
</dbReference>
<dbReference type="Gene3D" id="2.10.109.10">
    <property type="entry name" value="Umud Fragment, subunit A"/>
    <property type="match status" value="1"/>
</dbReference>
<dbReference type="Gene3D" id="1.10.10.10">
    <property type="entry name" value="Winged helix-like DNA-binding domain superfamily/Winged helix DNA-binding domain"/>
    <property type="match status" value="1"/>
</dbReference>
<dbReference type="HAMAP" id="MF_00015">
    <property type="entry name" value="LexA"/>
    <property type="match status" value="1"/>
</dbReference>
<dbReference type="InterPro" id="IPR011991">
    <property type="entry name" value="ArsR-like_HTH"/>
</dbReference>
<dbReference type="InterPro" id="IPR006200">
    <property type="entry name" value="LexA"/>
</dbReference>
<dbReference type="InterPro" id="IPR039418">
    <property type="entry name" value="LexA-like"/>
</dbReference>
<dbReference type="InterPro" id="IPR036286">
    <property type="entry name" value="LexA/Signal_pep-like_sf"/>
</dbReference>
<dbReference type="InterPro" id="IPR006199">
    <property type="entry name" value="LexA_DNA-bd_dom"/>
</dbReference>
<dbReference type="InterPro" id="IPR050077">
    <property type="entry name" value="LexA_repressor"/>
</dbReference>
<dbReference type="InterPro" id="IPR006197">
    <property type="entry name" value="Peptidase_S24_LexA"/>
</dbReference>
<dbReference type="InterPro" id="IPR015927">
    <property type="entry name" value="Peptidase_S24_S26A/B/C"/>
</dbReference>
<dbReference type="InterPro" id="IPR036388">
    <property type="entry name" value="WH-like_DNA-bd_sf"/>
</dbReference>
<dbReference type="InterPro" id="IPR036390">
    <property type="entry name" value="WH_DNA-bd_sf"/>
</dbReference>
<dbReference type="NCBIfam" id="TIGR00498">
    <property type="entry name" value="lexA"/>
    <property type="match status" value="1"/>
</dbReference>
<dbReference type="PANTHER" id="PTHR33516">
    <property type="entry name" value="LEXA REPRESSOR"/>
    <property type="match status" value="1"/>
</dbReference>
<dbReference type="PANTHER" id="PTHR33516:SF2">
    <property type="entry name" value="LEXA REPRESSOR-RELATED"/>
    <property type="match status" value="1"/>
</dbReference>
<dbReference type="Pfam" id="PF01726">
    <property type="entry name" value="LexA_DNA_bind"/>
    <property type="match status" value="1"/>
</dbReference>
<dbReference type="Pfam" id="PF00717">
    <property type="entry name" value="Peptidase_S24"/>
    <property type="match status" value="1"/>
</dbReference>
<dbReference type="PRINTS" id="PR00726">
    <property type="entry name" value="LEXASERPTASE"/>
</dbReference>
<dbReference type="SUPFAM" id="SSF51306">
    <property type="entry name" value="LexA/Signal peptidase"/>
    <property type="match status" value="1"/>
</dbReference>
<dbReference type="SUPFAM" id="SSF46785">
    <property type="entry name" value="Winged helix' DNA-binding domain"/>
    <property type="match status" value="1"/>
</dbReference>
<organism>
    <name type="scientific">Clostridioides difficile (strain 630)</name>
    <name type="common">Peptoclostridium difficile</name>
    <dbReference type="NCBI Taxonomy" id="272563"/>
    <lineage>
        <taxon>Bacteria</taxon>
        <taxon>Bacillati</taxon>
        <taxon>Bacillota</taxon>
        <taxon>Clostridia</taxon>
        <taxon>Peptostreptococcales</taxon>
        <taxon>Peptostreptococcaceae</taxon>
        <taxon>Clostridioides</taxon>
    </lineage>
</organism>
<feature type="chain" id="PRO_0000322724" description="LexA repressor">
    <location>
        <begin position="1"/>
        <end position="211"/>
    </location>
</feature>
<feature type="DNA-binding region" description="H-T-H motif" evidence="1">
    <location>
        <begin position="29"/>
        <end position="49"/>
    </location>
</feature>
<feature type="active site" description="For autocatalytic cleavage activity" evidence="1">
    <location>
        <position position="131"/>
    </location>
</feature>
<feature type="active site" description="For autocatalytic cleavage activity" evidence="1">
    <location>
        <position position="169"/>
    </location>
</feature>
<feature type="site" description="Cleavage; by autolysis" evidence="1">
    <location>
        <begin position="96"/>
        <end position="97"/>
    </location>
</feature>
<sequence length="211" mass="23473">MYLDLTEKQVLILEFIKSQIILKGYPPAVREICTAVGLRSTSTVHSHLNKLEKLGYIRKDPTKPRAIEVLERSKVNDVSGANQEIIELPLVGQITAGEPILAQQNIEEYIPFPASLVKGSNNFVLRVKGESMINAGILDEDYVVVDKKNTALNSQIVVALINGESATVKRFFKEGNLIRLQPENDFMEPIMLNDSEVEIVGIVTGVFRVIK</sequence>
<protein>
    <recommendedName>
        <fullName evidence="1">LexA repressor</fullName>
        <ecNumber evidence="1">3.4.21.88</ecNumber>
    </recommendedName>
</protein>
<comment type="function">
    <text evidence="1">Represses a number of genes involved in the response to DNA damage (SOS response), including recA and lexA. In the presence of single-stranded DNA, RecA interacts with LexA causing an autocatalytic cleavage which disrupts the DNA-binding part of LexA, leading to derepression of the SOS regulon and eventually DNA repair.</text>
</comment>
<comment type="catalytic activity">
    <reaction evidence="1">
        <text>Hydrolysis of Ala-|-Gly bond in repressor LexA.</text>
        <dbReference type="EC" id="3.4.21.88"/>
    </reaction>
</comment>
<comment type="subunit">
    <text evidence="1">Homodimer.</text>
</comment>
<comment type="similarity">
    <text evidence="1">Belongs to the peptidase S24 family.</text>
</comment>
<evidence type="ECO:0000255" key="1">
    <source>
        <dbReference type="HAMAP-Rule" id="MF_00015"/>
    </source>
</evidence>
<name>LEXA_CLOD6</name>
<proteinExistence type="inferred from homology"/>
<keyword id="KW-0068">Autocatalytic cleavage</keyword>
<keyword id="KW-0227">DNA damage</keyword>
<keyword id="KW-0234">DNA repair</keyword>
<keyword id="KW-0235">DNA replication</keyword>
<keyword id="KW-0238">DNA-binding</keyword>
<keyword id="KW-0378">Hydrolase</keyword>
<keyword id="KW-1185">Reference proteome</keyword>
<keyword id="KW-0678">Repressor</keyword>
<keyword id="KW-0742">SOS response</keyword>
<keyword id="KW-0804">Transcription</keyword>
<keyword id="KW-0805">Transcription regulation</keyword>
<reference key="1">
    <citation type="journal article" date="2006" name="Nat. Genet.">
        <title>The multidrug-resistant human pathogen Clostridium difficile has a highly mobile, mosaic genome.</title>
        <authorList>
            <person name="Sebaihia M."/>
            <person name="Wren B.W."/>
            <person name="Mullany P."/>
            <person name="Fairweather N.F."/>
            <person name="Minton N."/>
            <person name="Stabler R."/>
            <person name="Thomson N.R."/>
            <person name="Roberts A.P."/>
            <person name="Cerdeno-Tarraga A.M."/>
            <person name="Wang H."/>
            <person name="Holden M.T.G."/>
            <person name="Wright A."/>
            <person name="Churcher C."/>
            <person name="Quail M.A."/>
            <person name="Baker S."/>
            <person name="Bason N."/>
            <person name="Brooks K."/>
            <person name="Chillingworth T."/>
            <person name="Cronin A."/>
            <person name="Davis P."/>
            <person name="Dowd L."/>
            <person name="Fraser A."/>
            <person name="Feltwell T."/>
            <person name="Hance Z."/>
            <person name="Holroyd S."/>
            <person name="Jagels K."/>
            <person name="Moule S."/>
            <person name="Mungall K."/>
            <person name="Price C."/>
            <person name="Rabbinowitsch E."/>
            <person name="Sharp S."/>
            <person name="Simmonds M."/>
            <person name="Stevens K."/>
            <person name="Unwin L."/>
            <person name="Whithead S."/>
            <person name="Dupuy B."/>
            <person name="Dougan G."/>
            <person name="Barrell B."/>
            <person name="Parkhill J."/>
        </authorList>
    </citation>
    <scope>NUCLEOTIDE SEQUENCE [LARGE SCALE GENOMIC DNA]</scope>
    <source>
        <strain>630</strain>
    </source>
</reference>
<accession>Q187P1</accession>